<gene>
    <name evidence="1" type="primary">tpiA</name>
    <name type="ordered locus">Swoo_3565</name>
</gene>
<keyword id="KW-0963">Cytoplasm</keyword>
<keyword id="KW-0312">Gluconeogenesis</keyword>
<keyword id="KW-0324">Glycolysis</keyword>
<keyword id="KW-0413">Isomerase</keyword>
<keyword id="KW-1185">Reference proteome</keyword>
<protein>
    <recommendedName>
        <fullName evidence="1">Triosephosphate isomerase</fullName>
        <shortName evidence="1">TIM</shortName>
        <shortName evidence="1">TPI</shortName>
        <ecNumber evidence="1">5.3.1.1</ecNumber>
    </recommendedName>
    <alternativeName>
        <fullName evidence="1">Triose-phosphate isomerase</fullName>
    </alternativeName>
</protein>
<sequence>MALRRPMVAGNWKMNGSAQLAQELFKKFATKLQNDSAEVVLCPPTIYLESVRQQLDANKEALNGCLVRMGAQNLSQHDFGAYTGEVSGQMLKDSGCRYVIIGHSERRRMYGETSDIVAEKFAAAQKHGLTPILCVGESGPAREARRTFEVIAEELDVVIEKNGTMAFDNAIIAYEPLWAVGTGKSATPEQAQEVHAFIRKRLSEVSPFIGENIRILYGGSVTPSNAADLFAQPDVDGGLIGGVSLNSTEFLSLCSIAMSA</sequence>
<feature type="chain" id="PRO_1000096533" description="Triosephosphate isomerase">
    <location>
        <begin position="1"/>
        <end position="260"/>
    </location>
</feature>
<feature type="active site" description="Electrophile" evidence="1">
    <location>
        <position position="103"/>
    </location>
</feature>
<feature type="active site" description="Proton acceptor" evidence="1">
    <location>
        <position position="175"/>
    </location>
</feature>
<feature type="binding site" evidence="1">
    <location>
        <begin position="11"/>
        <end position="13"/>
    </location>
    <ligand>
        <name>substrate</name>
    </ligand>
</feature>
<feature type="binding site" evidence="1">
    <location>
        <position position="181"/>
    </location>
    <ligand>
        <name>substrate</name>
    </ligand>
</feature>
<feature type="binding site" evidence="1">
    <location>
        <position position="220"/>
    </location>
    <ligand>
        <name>substrate</name>
    </ligand>
</feature>
<feature type="binding site" evidence="1">
    <location>
        <begin position="241"/>
        <end position="242"/>
    </location>
    <ligand>
        <name>substrate</name>
    </ligand>
</feature>
<evidence type="ECO:0000255" key="1">
    <source>
        <dbReference type="HAMAP-Rule" id="MF_00147"/>
    </source>
</evidence>
<dbReference type="EC" id="5.3.1.1" evidence="1"/>
<dbReference type="EMBL" id="CP000961">
    <property type="protein sequence ID" value="ACA87829.1"/>
    <property type="molecule type" value="Genomic_DNA"/>
</dbReference>
<dbReference type="RefSeq" id="WP_012326162.1">
    <property type="nucleotide sequence ID" value="NC_010506.1"/>
</dbReference>
<dbReference type="SMR" id="B1KRR4"/>
<dbReference type="STRING" id="392500.Swoo_3565"/>
<dbReference type="KEGG" id="swd:Swoo_3565"/>
<dbReference type="eggNOG" id="COG0149">
    <property type="taxonomic scope" value="Bacteria"/>
</dbReference>
<dbReference type="HOGENOM" id="CLU_024251_2_1_6"/>
<dbReference type="UniPathway" id="UPA00109">
    <property type="reaction ID" value="UER00189"/>
</dbReference>
<dbReference type="UniPathway" id="UPA00138"/>
<dbReference type="Proteomes" id="UP000002168">
    <property type="component" value="Chromosome"/>
</dbReference>
<dbReference type="GO" id="GO:0005829">
    <property type="term" value="C:cytosol"/>
    <property type="evidence" value="ECO:0007669"/>
    <property type="project" value="TreeGrafter"/>
</dbReference>
<dbReference type="GO" id="GO:0004807">
    <property type="term" value="F:triose-phosphate isomerase activity"/>
    <property type="evidence" value="ECO:0007669"/>
    <property type="project" value="UniProtKB-UniRule"/>
</dbReference>
<dbReference type="GO" id="GO:0006094">
    <property type="term" value="P:gluconeogenesis"/>
    <property type="evidence" value="ECO:0007669"/>
    <property type="project" value="UniProtKB-UniRule"/>
</dbReference>
<dbReference type="GO" id="GO:0046166">
    <property type="term" value="P:glyceraldehyde-3-phosphate biosynthetic process"/>
    <property type="evidence" value="ECO:0007669"/>
    <property type="project" value="TreeGrafter"/>
</dbReference>
<dbReference type="GO" id="GO:0019563">
    <property type="term" value="P:glycerol catabolic process"/>
    <property type="evidence" value="ECO:0007669"/>
    <property type="project" value="TreeGrafter"/>
</dbReference>
<dbReference type="GO" id="GO:0006096">
    <property type="term" value="P:glycolytic process"/>
    <property type="evidence" value="ECO:0007669"/>
    <property type="project" value="UniProtKB-UniRule"/>
</dbReference>
<dbReference type="CDD" id="cd00311">
    <property type="entry name" value="TIM"/>
    <property type="match status" value="1"/>
</dbReference>
<dbReference type="FunFam" id="3.20.20.70:FF:000016">
    <property type="entry name" value="Triosephosphate isomerase"/>
    <property type="match status" value="1"/>
</dbReference>
<dbReference type="Gene3D" id="3.20.20.70">
    <property type="entry name" value="Aldolase class I"/>
    <property type="match status" value="1"/>
</dbReference>
<dbReference type="HAMAP" id="MF_00147_B">
    <property type="entry name" value="TIM_B"/>
    <property type="match status" value="1"/>
</dbReference>
<dbReference type="InterPro" id="IPR013785">
    <property type="entry name" value="Aldolase_TIM"/>
</dbReference>
<dbReference type="InterPro" id="IPR035990">
    <property type="entry name" value="TIM_sf"/>
</dbReference>
<dbReference type="InterPro" id="IPR022896">
    <property type="entry name" value="TrioseP_Isoase_bac/euk"/>
</dbReference>
<dbReference type="InterPro" id="IPR000652">
    <property type="entry name" value="Triosephosphate_isomerase"/>
</dbReference>
<dbReference type="InterPro" id="IPR020861">
    <property type="entry name" value="Triosephosphate_isomerase_AS"/>
</dbReference>
<dbReference type="NCBIfam" id="TIGR00419">
    <property type="entry name" value="tim"/>
    <property type="match status" value="1"/>
</dbReference>
<dbReference type="PANTHER" id="PTHR21139">
    <property type="entry name" value="TRIOSEPHOSPHATE ISOMERASE"/>
    <property type="match status" value="1"/>
</dbReference>
<dbReference type="PANTHER" id="PTHR21139:SF42">
    <property type="entry name" value="TRIOSEPHOSPHATE ISOMERASE"/>
    <property type="match status" value="1"/>
</dbReference>
<dbReference type="Pfam" id="PF00121">
    <property type="entry name" value="TIM"/>
    <property type="match status" value="1"/>
</dbReference>
<dbReference type="SUPFAM" id="SSF51351">
    <property type="entry name" value="Triosephosphate isomerase (TIM)"/>
    <property type="match status" value="1"/>
</dbReference>
<dbReference type="PROSITE" id="PS00171">
    <property type="entry name" value="TIM_1"/>
    <property type="match status" value="1"/>
</dbReference>
<dbReference type="PROSITE" id="PS51440">
    <property type="entry name" value="TIM_2"/>
    <property type="match status" value="1"/>
</dbReference>
<proteinExistence type="inferred from homology"/>
<organism>
    <name type="scientific">Shewanella woodyi (strain ATCC 51908 / MS32)</name>
    <dbReference type="NCBI Taxonomy" id="392500"/>
    <lineage>
        <taxon>Bacteria</taxon>
        <taxon>Pseudomonadati</taxon>
        <taxon>Pseudomonadota</taxon>
        <taxon>Gammaproteobacteria</taxon>
        <taxon>Alteromonadales</taxon>
        <taxon>Shewanellaceae</taxon>
        <taxon>Shewanella</taxon>
    </lineage>
</organism>
<name>TPIS_SHEWM</name>
<reference key="1">
    <citation type="submission" date="2008-02" db="EMBL/GenBank/DDBJ databases">
        <title>Complete sequence of Shewanella woodyi ATCC 51908.</title>
        <authorList>
            <consortium name="US DOE Joint Genome Institute"/>
            <person name="Copeland A."/>
            <person name="Lucas S."/>
            <person name="Lapidus A."/>
            <person name="Glavina del Rio T."/>
            <person name="Dalin E."/>
            <person name="Tice H."/>
            <person name="Bruce D."/>
            <person name="Goodwin L."/>
            <person name="Pitluck S."/>
            <person name="Sims D."/>
            <person name="Brettin T."/>
            <person name="Detter J.C."/>
            <person name="Han C."/>
            <person name="Kuske C.R."/>
            <person name="Schmutz J."/>
            <person name="Larimer F."/>
            <person name="Land M."/>
            <person name="Hauser L."/>
            <person name="Kyrpides N."/>
            <person name="Lykidis A."/>
            <person name="Zhao J.-S."/>
            <person name="Richardson P."/>
        </authorList>
    </citation>
    <scope>NUCLEOTIDE SEQUENCE [LARGE SCALE GENOMIC DNA]</scope>
    <source>
        <strain>ATCC 51908 / MS32</strain>
    </source>
</reference>
<comment type="function">
    <text evidence="1">Involved in the gluconeogenesis. Catalyzes stereospecifically the conversion of dihydroxyacetone phosphate (DHAP) to D-glyceraldehyde-3-phosphate (G3P).</text>
</comment>
<comment type="catalytic activity">
    <reaction evidence="1">
        <text>D-glyceraldehyde 3-phosphate = dihydroxyacetone phosphate</text>
        <dbReference type="Rhea" id="RHEA:18585"/>
        <dbReference type="ChEBI" id="CHEBI:57642"/>
        <dbReference type="ChEBI" id="CHEBI:59776"/>
        <dbReference type="EC" id="5.3.1.1"/>
    </reaction>
</comment>
<comment type="pathway">
    <text evidence="1">Carbohydrate biosynthesis; gluconeogenesis.</text>
</comment>
<comment type="pathway">
    <text evidence="1">Carbohydrate degradation; glycolysis; D-glyceraldehyde 3-phosphate from glycerone phosphate: step 1/1.</text>
</comment>
<comment type="subunit">
    <text evidence="1">Homodimer.</text>
</comment>
<comment type="subcellular location">
    <subcellularLocation>
        <location evidence="1">Cytoplasm</location>
    </subcellularLocation>
</comment>
<comment type="similarity">
    <text evidence="1">Belongs to the triosephosphate isomerase family.</text>
</comment>
<accession>B1KRR4</accession>